<reference key="1">
    <citation type="submission" date="2006-12" db="EMBL/GenBank/DDBJ databases">
        <title>Complete sequence of chromosome 1 of Acidovorax sp. JS42.</title>
        <authorList>
            <person name="Copeland A."/>
            <person name="Lucas S."/>
            <person name="Lapidus A."/>
            <person name="Barry K."/>
            <person name="Detter J.C."/>
            <person name="Glavina del Rio T."/>
            <person name="Dalin E."/>
            <person name="Tice H."/>
            <person name="Pitluck S."/>
            <person name="Chertkov O."/>
            <person name="Brettin T."/>
            <person name="Bruce D."/>
            <person name="Han C."/>
            <person name="Tapia R."/>
            <person name="Gilna P."/>
            <person name="Schmutz J."/>
            <person name="Larimer F."/>
            <person name="Land M."/>
            <person name="Hauser L."/>
            <person name="Kyrpides N."/>
            <person name="Kim E."/>
            <person name="Stahl D."/>
            <person name="Richardson P."/>
        </authorList>
    </citation>
    <scope>NUCLEOTIDE SEQUENCE [LARGE SCALE GENOMIC DNA]</scope>
    <source>
        <strain>JS42</strain>
    </source>
</reference>
<proteinExistence type="inferred from homology"/>
<gene>
    <name evidence="2" type="primary">tuf1</name>
    <name type="ordered locus">Ajs_0276</name>
</gene>
<accession>A1W2Q5</accession>
<name>EFTU1_ACISJ</name>
<sequence>MAKGKFERTKPHVNVGTIGHVDHGKTTLTAAIATVLAKKFGGEAKGYDQIDNAPEEKARGITINTSHVEYETATRHYAHVDCPGHADYVKNMITGAAQMDGAILVCSAADGPMPQTREHILLARQVGVPYIIVFLNKCDMVDDEELLELVEMEVRELLDKYDFPGDDTPIIRGSAKLALEGDQSDKGEPAILRLAEALDTYIPTPERAVDGAFLMPVEDVFSISGRGTVVTGRVERGIIKVGEEIEIVGIRDTQKTTVTGVEMFRKLLDQGQAGDNVGLLLRGTKREDVERGQVLCKPGSIKPHTHFTAEVYVLSKDEGGRHTPFFNNYRPQFYFRTTDVTGSIELPADKEMVMPGDNVSITVKLINPIAMEEGLRFAIREGGRTVGAGVVAKIIA</sequence>
<organism>
    <name type="scientific">Acidovorax sp. (strain JS42)</name>
    <dbReference type="NCBI Taxonomy" id="232721"/>
    <lineage>
        <taxon>Bacteria</taxon>
        <taxon>Pseudomonadati</taxon>
        <taxon>Pseudomonadota</taxon>
        <taxon>Betaproteobacteria</taxon>
        <taxon>Burkholderiales</taxon>
        <taxon>Comamonadaceae</taxon>
        <taxon>Acidovorax</taxon>
    </lineage>
</organism>
<dbReference type="EC" id="3.6.5.3" evidence="2"/>
<dbReference type="EMBL" id="CP000539">
    <property type="protein sequence ID" value="ABM40530.1"/>
    <property type="molecule type" value="Genomic_DNA"/>
</dbReference>
<dbReference type="SMR" id="A1W2Q5"/>
<dbReference type="STRING" id="232721.Ajs_0276"/>
<dbReference type="KEGG" id="ajs:Ajs_0276"/>
<dbReference type="eggNOG" id="COG0050">
    <property type="taxonomic scope" value="Bacteria"/>
</dbReference>
<dbReference type="HOGENOM" id="CLU_007265_0_0_4"/>
<dbReference type="Proteomes" id="UP000000645">
    <property type="component" value="Chromosome"/>
</dbReference>
<dbReference type="GO" id="GO:0005829">
    <property type="term" value="C:cytosol"/>
    <property type="evidence" value="ECO:0007669"/>
    <property type="project" value="TreeGrafter"/>
</dbReference>
<dbReference type="GO" id="GO:0005525">
    <property type="term" value="F:GTP binding"/>
    <property type="evidence" value="ECO:0007669"/>
    <property type="project" value="UniProtKB-UniRule"/>
</dbReference>
<dbReference type="GO" id="GO:0003924">
    <property type="term" value="F:GTPase activity"/>
    <property type="evidence" value="ECO:0007669"/>
    <property type="project" value="InterPro"/>
</dbReference>
<dbReference type="GO" id="GO:0097216">
    <property type="term" value="F:guanosine tetraphosphate binding"/>
    <property type="evidence" value="ECO:0007669"/>
    <property type="project" value="UniProtKB-ARBA"/>
</dbReference>
<dbReference type="GO" id="GO:0003746">
    <property type="term" value="F:translation elongation factor activity"/>
    <property type="evidence" value="ECO:0007669"/>
    <property type="project" value="UniProtKB-UniRule"/>
</dbReference>
<dbReference type="CDD" id="cd01884">
    <property type="entry name" value="EF_Tu"/>
    <property type="match status" value="1"/>
</dbReference>
<dbReference type="CDD" id="cd03697">
    <property type="entry name" value="EFTU_II"/>
    <property type="match status" value="1"/>
</dbReference>
<dbReference type="CDD" id="cd03707">
    <property type="entry name" value="EFTU_III"/>
    <property type="match status" value="1"/>
</dbReference>
<dbReference type="FunFam" id="2.40.30.10:FF:000001">
    <property type="entry name" value="Elongation factor Tu"/>
    <property type="match status" value="1"/>
</dbReference>
<dbReference type="FunFam" id="3.40.50.300:FF:000003">
    <property type="entry name" value="Elongation factor Tu"/>
    <property type="match status" value="1"/>
</dbReference>
<dbReference type="Gene3D" id="3.40.50.300">
    <property type="entry name" value="P-loop containing nucleotide triphosphate hydrolases"/>
    <property type="match status" value="1"/>
</dbReference>
<dbReference type="Gene3D" id="2.40.30.10">
    <property type="entry name" value="Translation factors"/>
    <property type="match status" value="2"/>
</dbReference>
<dbReference type="HAMAP" id="MF_00118_B">
    <property type="entry name" value="EF_Tu_B"/>
    <property type="match status" value="1"/>
</dbReference>
<dbReference type="InterPro" id="IPR041709">
    <property type="entry name" value="EF-Tu_GTP-bd"/>
</dbReference>
<dbReference type="InterPro" id="IPR050055">
    <property type="entry name" value="EF-Tu_GTPase"/>
</dbReference>
<dbReference type="InterPro" id="IPR004161">
    <property type="entry name" value="EFTu-like_2"/>
</dbReference>
<dbReference type="InterPro" id="IPR033720">
    <property type="entry name" value="EFTU_2"/>
</dbReference>
<dbReference type="InterPro" id="IPR031157">
    <property type="entry name" value="G_TR_CS"/>
</dbReference>
<dbReference type="InterPro" id="IPR027417">
    <property type="entry name" value="P-loop_NTPase"/>
</dbReference>
<dbReference type="InterPro" id="IPR005225">
    <property type="entry name" value="Small_GTP-bd"/>
</dbReference>
<dbReference type="InterPro" id="IPR000795">
    <property type="entry name" value="T_Tr_GTP-bd_dom"/>
</dbReference>
<dbReference type="InterPro" id="IPR009000">
    <property type="entry name" value="Transl_B-barrel_sf"/>
</dbReference>
<dbReference type="InterPro" id="IPR009001">
    <property type="entry name" value="Transl_elong_EF1A/Init_IF2_C"/>
</dbReference>
<dbReference type="InterPro" id="IPR004541">
    <property type="entry name" value="Transl_elong_EFTu/EF1A_bac/org"/>
</dbReference>
<dbReference type="InterPro" id="IPR004160">
    <property type="entry name" value="Transl_elong_EFTu/EF1A_C"/>
</dbReference>
<dbReference type="NCBIfam" id="TIGR00485">
    <property type="entry name" value="EF-Tu"/>
    <property type="match status" value="1"/>
</dbReference>
<dbReference type="NCBIfam" id="NF000766">
    <property type="entry name" value="PRK00049.1"/>
    <property type="match status" value="1"/>
</dbReference>
<dbReference type="NCBIfam" id="NF009372">
    <property type="entry name" value="PRK12735.1"/>
    <property type="match status" value="1"/>
</dbReference>
<dbReference type="NCBIfam" id="NF009373">
    <property type="entry name" value="PRK12736.1"/>
    <property type="match status" value="1"/>
</dbReference>
<dbReference type="NCBIfam" id="TIGR00231">
    <property type="entry name" value="small_GTP"/>
    <property type="match status" value="1"/>
</dbReference>
<dbReference type="PANTHER" id="PTHR43721:SF22">
    <property type="entry name" value="ELONGATION FACTOR TU, MITOCHONDRIAL"/>
    <property type="match status" value="1"/>
</dbReference>
<dbReference type="PANTHER" id="PTHR43721">
    <property type="entry name" value="ELONGATION FACTOR TU-RELATED"/>
    <property type="match status" value="1"/>
</dbReference>
<dbReference type="Pfam" id="PF00009">
    <property type="entry name" value="GTP_EFTU"/>
    <property type="match status" value="1"/>
</dbReference>
<dbReference type="Pfam" id="PF03144">
    <property type="entry name" value="GTP_EFTU_D2"/>
    <property type="match status" value="1"/>
</dbReference>
<dbReference type="Pfam" id="PF03143">
    <property type="entry name" value="GTP_EFTU_D3"/>
    <property type="match status" value="1"/>
</dbReference>
<dbReference type="PRINTS" id="PR00315">
    <property type="entry name" value="ELONGATNFCT"/>
</dbReference>
<dbReference type="SUPFAM" id="SSF50465">
    <property type="entry name" value="EF-Tu/eEF-1alpha/eIF2-gamma C-terminal domain"/>
    <property type="match status" value="1"/>
</dbReference>
<dbReference type="SUPFAM" id="SSF52540">
    <property type="entry name" value="P-loop containing nucleoside triphosphate hydrolases"/>
    <property type="match status" value="1"/>
</dbReference>
<dbReference type="SUPFAM" id="SSF50447">
    <property type="entry name" value="Translation proteins"/>
    <property type="match status" value="1"/>
</dbReference>
<dbReference type="PROSITE" id="PS00301">
    <property type="entry name" value="G_TR_1"/>
    <property type="match status" value="1"/>
</dbReference>
<dbReference type="PROSITE" id="PS51722">
    <property type="entry name" value="G_TR_2"/>
    <property type="match status" value="1"/>
</dbReference>
<keyword id="KW-0963">Cytoplasm</keyword>
<keyword id="KW-0251">Elongation factor</keyword>
<keyword id="KW-0342">GTP-binding</keyword>
<keyword id="KW-0378">Hydrolase</keyword>
<keyword id="KW-0460">Magnesium</keyword>
<keyword id="KW-0479">Metal-binding</keyword>
<keyword id="KW-0547">Nucleotide-binding</keyword>
<keyword id="KW-0648">Protein biosynthesis</keyword>
<comment type="function">
    <text evidence="2">GTP hydrolase that promotes the GTP-dependent binding of aminoacyl-tRNA to the A-site of ribosomes during protein biosynthesis.</text>
</comment>
<comment type="catalytic activity">
    <reaction evidence="2">
        <text>GTP + H2O = GDP + phosphate + H(+)</text>
        <dbReference type="Rhea" id="RHEA:19669"/>
        <dbReference type="ChEBI" id="CHEBI:15377"/>
        <dbReference type="ChEBI" id="CHEBI:15378"/>
        <dbReference type="ChEBI" id="CHEBI:37565"/>
        <dbReference type="ChEBI" id="CHEBI:43474"/>
        <dbReference type="ChEBI" id="CHEBI:58189"/>
        <dbReference type="EC" id="3.6.5.3"/>
    </reaction>
    <physiologicalReaction direction="left-to-right" evidence="2">
        <dbReference type="Rhea" id="RHEA:19670"/>
    </physiologicalReaction>
</comment>
<comment type="subunit">
    <text evidence="2">Monomer.</text>
</comment>
<comment type="subcellular location">
    <subcellularLocation>
        <location evidence="2">Cytoplasm</location>
    </subcellularLocation>
</comment>
<comment type="similarity">
    <text evidence="2">Belongs to the TRAFAC class translation factor GTPase superfamily. Classic translation factor GTPase family. EF-Tu/EF-1A subfamily.</text>
</comment>
<evidence type="ECO:0000250" key="1"/>
<evidence type="ECO:0000255" key="2">
    <source>
        <dbReference type="HAMAP-Rule" id="MF_00118"/>
    </source>
</evidence>
<protein>
    <recommendedName>
        <fullName evidence="2">Elongation factor Tu 1</fullName>
        <shortName evidence="2">EF-Tu 1</shortName>
        <ecNumber evidence="2">3.6.5.3</ecNumber>
    </recommendedName>
</protein>
<feature type="chain" id="PRO_0000337299" description="Elongation factor Tu 1">
    <location>
        <begin position="1"/>
        <end position="396"/>
    </location>
</feature>
<feature type="domain" description="tr-type G">
    <location>
        <begin position="10"/>
        <end position="206"/>
    </location>
</feature>
<feature type="region of interest" description="G1" evidence="1">
    <location>
        <begin position="19"/>
        <end position="26"/>
    </location>
</feature>
<feature type="region of interest" description="G2" evidence="1">
    <location>
        <begin position="60"/>
        <end position="64"/>
    </location>
</feature>
<feature type="region of interest" description="G3" evidence="1">
    <location>
        <begin position="81"/>
        <end position="84"/>
    </location>
</feature>
<feature type="region of interest" description="G4" evidence="1">
    <location>
        <begin position="136"/>
        <end position="139"/>
    </location>
</feature>
<feature type="region of interest" description="G5" evidence="1">
    <location>
        <begin position="174"/>
        <end position="176"/>
    </location>
</feature>
<feature type="binding site" evidence="2">
    <location>
        <begin position="19"/>
        <end position="26"/>
    </location>
    <ligand>
        <name>GTP</name>
        <dbReference type="ChEBI" id="CHEBI:37565"/>
    </ligand>
</feature>
<feature type="binding site" evidence="2">
    <location>
        <position position="26"/>
    </location>
    <ligand>
        <name>Mg(2+)</name>
        <dbReference type="ChEBI" id="CHEBI:18420"/>
    </ligand>
</feature>
<feature type="binding site" evidence="2">
    <location>
        <begin position="81"/>
        <end position="85"/>
    </location>
    <ligand>
        <name>GTP</name>
        <dbReference type="ChEBI" id="CHEBI:37565"/>
    </ligand>
</feature>
<feature type="binding site" evidence="2">
    <location>
        <begin position="136"/>
        <end position="139"/>
    </location>
    <ligand>
        <name>GTP</name>
        <dbReference type="ChEBI" id="CHEBI:37565"/>
    </ligand>
</feature>